<comment type="function">
    <text evidence="1">Modulates RecA activity.</text>
</comment>
<comment type="subcellular location">
    <subcellularLocation>
        <location evidence="1">Cytoplasm</location>
    </subcellularLocation>
</comment>
<comment type="similarity">
    <text evidence="1">Belongs to the RecX family.</text>
</comment>
<protein>
    <recommendedName>
        <fullName evidence="1">Regulatory protein RecX</fullName>
    </recommendedName>
</protein>
<keyword id="KW-0963">Cytoplasm</keyword>
<sequence length="183" mass="20685">MTSFPHPSTSESGPDPDSEPNREEQAHAYCLRLLTARARTRAELSGKLTQRGYDEPVVARVLDRLVEVGLVDDEDFAEQWVRSRHLYAGKGKRALAAELRRKGVDDEVISSSLADIDAGAERDRAERLVRDRLRREKLDDEPGSDLKVKRRMAGMLARRGYSQSMALDVVTVELAGERERRRV</sequence>
<dbReference type="EMBL" id="CP000580">
    <property type="protein sequence ID" value="ABN97921.1"/>
    <property type="molecule type" value="Genomic_DNA"/>
</dbReference>
<dbReference type="SMR" id="A3PYE4"/>
<dbReference type="KEGG" id="mjl:Mjls_2135"/>
<dbReference type="HOGENOM" id="CLU_066607_0_2_11"/>
<dbReference type="BioCyc" id="MSP164757:G1G8C-2155-MONOMER"/>
<dbReference type="GO" id="GO:0005737">
    <property type="term" value="C:cytoplasm"/>
    <property type="evidence" value="ECO:0007669"/>
    <property type="project" value="UniProtKB-SubCell"/>
</dbReference>
<dbReference type="GO" id="GO:0006282">
    <property type="term" value="P:regulation of DNA repair"/>
    <property type="evidence" value="ECO:0007669"/>
    <property type="project" value="UniProtKB-UniRule"/>
</dbReference>
<dbReference type="Gene3D" id="1.10.10.10">
    <property type="entry name" value="Winged helix-like DNA-binding domain superfamily/Winged helix DNA-binding domain"/>
    <property type="match status" value="2"/>
</dbReference>
<dbReference type="HAMAP" id="MF_01114">
    <property type="entry name" value="RecX"/>
    <property type="match status" value="1"/>
</dbReference>
<dbReference type="InterPro" id="IPR053926">
    <property type="entry name" value="RecX_HTH_1st"/>
</dbReference>
<dbReference type="InterPro" id="IPR053924">
    <property type="entry name" value="RecX_HTH_2nd"/>
</dbReference>
<dbReference type="InterPro" id="IPR003783">
    <property type="entry name" value="Regulatory_RecX"/>
</dbReference>
<dbReference type="InterPro" id="IPR036388">
    <property type="entry name" value="WH-like_DNA-bd_sf"/>
</dbReference>
<dbReference type="NCBIfam" id="NF001056">
    <property type="entry name" value="PRK00117.3-1"/>
    <property type="match status" value="1"/>
</dbReference>
<dbReference type="PANTHER" id="PTHR33602">
    <property type="entry name" value="REGULATORY PROTEIN RECX FAMILY PROTEIN"/>
    <property type="match status" value="1"/>
</dbReference>
<dbReference type="PANTHER" id="PTHR33602:SF1">
    <property type="entry name" value="REGULATORY PROTEIN RECX FAMILY PROTEIN"/>
    <property type="match status" value="1"/>
</dbReference>
<dbReference type="Pfam" id="PF21982">
    <property type="entry name" value="RecX_HTH1"/>
    <property type="match status" value="1"/>
</dbReference>
<dbReference type="Pfam" id="PF02631">
    <property type="entry name" value="RecX_HTH2"/>
    <property type="match status" value="1"/>
</dbReference>
<accession>A3PYE4</accession>
<reference key="1">
    <citation type="submission" date="2007-02" db="EMBL/GenBank/DDBJ databases">
        <title>Complete sequence of Mycobacterium sp. JLS.</title>
        <authorList>
            <consortium name="US DOE Joint Genome Institute"/>
            <person name="Copeland A."/>
            <person name="Lucas S."/>
            <person name="Lapidus A."/>
            <person name="Barry K."/>
            <person name="Detter J.C."/>
            <person name="Glavina del Rio T."/>
            <person name="Hammon N."/>
            <person name="Israni S."/>
            <person name="Dalin E."/>
            <person name="Tice H."/>
            <person name="Pitluck S."/>
            <person name="Chain P."/>
            <person name="Malfatti S."/>
            <person name="Shin M."/>
            <person name="Vergez L."/>
            <person name="Schmutz J."/>
            <person name="Larimer F."/>
            <person name="Land M."/>
            <person name="Hauser L."/>
            <person name="Kyrpides N."/>
            <person name="Mikhailova N."/>
            <person name="Miller C.D."/>
            <person name="Anderson A.J."/>
            <person name="Sims R.C."/>
            <person name="Richardson P."/>
        </authorList>
    </citation>
    <scope>NUCLEOTIDE SEQUENCE [LARGE SCALE GENOMIC DNA]</scope>
    <source>
        <strain>JLS</strain>
    </source>
</reference>
<gene>
    <name evidence="1" type="primary">recX</name>
    <name type="ordered locus">Mjls_2135</name>
</gene>
<feature type="chain" id="PRO_1000084983" description="Regulatory protein RecX">
    <location>
        <begin position="1"/>
        <end position="183"/>
    </location>
</feature>
<feature type="region of interest" description="Disordered" evidence="2">
    <location>
        <begin position="1"/>
        <end position="26"/>
    </location>
</feature>
<feature type="compositionally biased region" description="Polar residues" evidence="2">
    <location>
        <begin position="1"/>
        <end position="12"/>
    </location>
</feature>
<name>RECX_MYCSJ</name>
<evidence type="ECO:0000255" key="1">
    <source>
        <dbReference type="HAMAP-Rule" id="MF_01114"/>
    </source>
</evidence>
<evidence type="ECO:0000256" key="2">
    <source>
        <dbReference type="SAM" id="MobiDB-lite"/>
    </source>
</evidence>
<organism>
    <name type="scientific">Mycobacterium sp. (strain JLS)</name>
    <dbReference type="NCBI Taxonomy" id="164757"/>
    <lineage>
        <taxon>Bacteria</taxon>
        <taxon>Bacillati</taxon>
        <taxon>Actinomycetota</taxon>
        <taxon>Actinomycetes</taxon>
        <taxon>Mycobacteriales</taxon>
        <taxon>Mycobacteriaceae</taxon>
        <taxon>Mycobacterium</taxon>
    </lineage>
</organism>
<proteinExistence type="inferred from homology"/>